<proteinExistence type="inferred from homology"/>
<protein>
    <recommendedName>
        <fullName evidence="1">Small ribosomal subunit protein uS9</fullName>
    </recommendedName>
    <alternativeName>
        <fullName evidence="3">30S ribosomal protein S9</fullName>
    </alternativeName>
</protein>
<dbReference type="EMBL" id="AP006841">
    <property type="protein sequence ID" value="BAD50754.1"/>
    <property type="molecule type" value="Genomic_DNA"/>
</dbReference>
<dbReference type="RefSeq" id="WP_005791749.1">
    <property type="nucleotide sequence ID" value="NZ_UYXF01000013.1"/>
</dbReference>
<dbReference type="RefSeq" id="YP_101288.1">
    <property type="nucleotide sequence ID" value="NC_006347.1"/>
</dbReference>
<dbReference type="SMR" id="Q64P28"/>
<dbReference type="STRING" id="295405.BF4012"/>
<dbReference type="GeneID" id="60365720"/>
<dbReference type="KEGG" id="bfr:BF4012"/>
<dbReference type="PATRIC" id="fig|295405.11.peg.3861"/>
<dbReference type="HOGENOM" id="CLU_046483_2_1_10"/>
<dbReference type="OrthoDB" id="9803965at2"/>
<dbReference type="Proteomes" id="UP000002197">
    <property type="component" value="Chromosome"/>
</dbReference>
<dbReference type="GO" id="GO:0022627">
    <property type="term" value="C:cytosolic small ribosomal subunit"/>
    <property type="evidence" value="ECO:0007669"/>
    <property type="project" value="TreeGrafter"/>
</dbReference>
<dbReference type="GO" id="GO:0003723">
    <property type="term" value="F:RNA binding"/>
    <property type="evidence" value="ECO:0007669"/>
    <property type="project" value="TreeGrafter"/>
</dbReference>
<dbReference type="GO" id="GO:0003735">
    <property type="term" value="F:structural constituent of ribosome"/>
    <property type="evidence" value="ECO:0007669"/>
    <property type="project" value="InterPro"/>
</dbReference>
<dbReference type="GO" id="GO:0006412">
    <property type="term" value="P:translation"/>
    <property type="evidence" value="ECO:0007669"/>
    <property type="project" value="UniProtKB-UniRule"/>
</dbReference>
<dbReference type="FunFam" id="3.30.230.10:FF:000001">
    <property type="entry name" value="30S ribosomal protein S9"/>
    <property type="match status" value="1"/>
</dbReference>
<dbReference type="Gene3D" id="3.30.230.10">
    <property type="match status" value="1"/>
</dbReference>
<dbReference type="HAMAP" id="MF_00532_B">
    <property type="entry name" value="Ribosomal_uS9_B"/>
    <property type="match status" value="1"/>
</dbReference>
<dbReference type="InterPro" id="IPR020568">
    <property type="entry name" value="Ribosomal_Su5_D2-typ_SF"/>
</dbReference>
<dbReference type="InterPro" id="IPR000754">
    <property type="entry name" value="Ribosomal_uS9"/>
</dbReference>
<dbReference type="InterPro" id="IPR023035">
    <property type="entry name" value="Ribosomal_uS9_bac/plastid"/>
</dbReference>
<dbReference type="InterPro" id="IPR020574">
    <property type="entry name" value="Ribosomal_uS9_CS"/>
</dbReference>
<dbReference type="InterPro" id="IPR014721">
    <property type="entry name" value="Ribsml_uS5_D2-typ_fold_subgr"/>
</dbReference>
<dbReference type="NCBIfam" id="NF001099">
    <property type="entry name" value="PRK00132.1"/>
    <property type="match status" value="1"/>
</dbReference>
<dbReference type="PANTHER" id="PTHR21569">
    <property type="entry name" value="RIBOSOMAL PROTEIN S9"/>
    <property type="match status" value="1"/>
</dbReference>
<dbReference type="PANTHER" id="PTHR21569:SF1">
    <property type="entry name" value="SMALL RIBOSOMAL SUBUNIT PROTEIN US9M"/>
    <property type="match status" value="1"/>
</dbReference>
<dbReference type="Pfam" id="PF00380">
    <property type="entry name" value="Ribosomal_S9"/>
    <property type="match status" value="1"/>
</dbReference>
<dbReference type="SUPFAM" id="SSF54211">
    <property type="entry name" value="Ribosomal protein S5 domain 2-like"/>
    <property type="match status" value="1"/>
</dbReference>
<dbReference type="PROSITE" id="PS00360">
    <property type="entry name" value="RIBOSOMAL_S9"/>
    <property type="match status" value="1"/>
</dbReference>
<keyword id="KW-0687">Ribonucleoprotein</keyword>
<keyword id="KW-0689">Ribosomal protein</keyword>
<sequence>MEVVNALGRRKRAIARVFVSEGTGKITINKRDLAEYFPSTILQYVVKQPLNKLGVAEKYDIKVNLCGGGFTGQSQALRLAIARALVKINAEDKPALRSEGFMTRDPRSVERKKPGQPKARRRFQFSKR</sequence>
<accession>Q64P28</accession>
<gene>
    <name evidence="1" type="primary">rpsI</name>
    <name type="ordered locus">BF4012</name>
</gene>
<comment type="similarity">
    <text evidence="1">Belongs to the universal ribosomal protein uS9 family.</text>
</comment>
<name>RS9_BACFR</name>
<organism>
    <name type="scientific">Bacteroides fragilis (strain YCH46)</name>
    <dbReference type="NCBI Taxonomy" id="295405"/>
    <lineage>
        <taxon>Bacteria</taxon>
        <taxon>Pseudomonadati</taxon>
        <taxon>Bacteroidota</taxon>
        <taxon>Bacteroidia</taxon>
        <taxon>Bacteroidales</taxon>
        <taxon>Bacteroidaceae</taxon>
        <taxon>Bacteroides</taxon>
    </lineage>
</organism>
<reference key="1">
    <citation type="journal article" date="2004" name="Proc. Natl. Acad. Sci. U.S.A.">
        <title>Genomic analysis of Bacteroides fragilis reveals extensive DNA inversions regulating cell surface adaptation.</title>
        <authorList>
            <person name="Kuwahara T."/>
            <person name="Yamashita A."/>
            <person name="Hirakawa H."/>
            <person name="Nakayama H."/>
            <person name="Toh H."/>
            <person name="Okada N."/>
            <person name="Kuhara S."/>
            <person name="Hattori M."/>
            <person name="Hayashi T."/>
            <person name="Ohnishi Y."/>
        </authorList>
    </citation>
    <scope>NUCLEOTIDE SEQUENCE [LARGE SCALE GENOMIC DNA]</scope>
    <source>
        <strain>YCH46</strain>
    </source>
</reference>
<feature type="chain" id="PRO_1000128079" description="Small ribosomal subunit protein uS9">
    <location>
        <begin position="1"/>
        <end position="128"/>
    </location>
</feature>
<feature type="region of interest" description="Disordered" evidence="2">
    <location>
        <begin position="97"/>
        <end position="128"/>
    </location>
</feature>
<feature type="compositionally biased region" description="Basic and acidic residues" evidence="2">
    <location>
        <begin position="97"/>
        <end position="113"/>
    </location>
</feature>
<feature type="compositionally biased region" description="Basic residues" evidence="2">
    <location>
        <begin position="114"/>
        <end position="128"/>
    </location>
</feature>
<evidence type="ECO:0000255" key="1">
    <source>
        <dbReference type="HAMAP-Rule" id="MF_00532"/>
    </source>
</evidence>
<evidence type="ECO:0000256" key="2">
    <source>
        <dbReference type="SAM" id="MobiDB-lite"/>
    </source>
</evidence>
<evidence type="ECO:0000305" key="3"/>